<accession>Q68A21</accession>
<dbReference type="EMBL" id="AB182574">
    <property type="protein sequence ID" value="BAD38899.1"/>
    <property type="molecule type" value="mRNA"/>
</dbReference>
<dbReference type="RefSeq" id="NP_001017503.1">
    <property type="nucleotide sequence ID" value="NM_001017503.1"/>
</dbReference>
<dbReference type="SMR" id="Q68A21"/>
<dbReference type="BioGRID" id="269717">
    <property type="interactions" value="5"/>
</dbReference>
<dbReference type="FunCoup" id="Q68A21">
    <property type="interactions" value="3627"/>
</dbReference>
<dbReference type="IntAct" id="Q68A21">
    <property type="interactions" value="1"/>
</dbReference>
<dbReference type="MINT" id="Q68A21"/>
<dbReference type="STRING" id="10116.ENSRNOP00000069267"/>
<dbReference type="GlyGen" id="Q68A21">
    <property type="glycosylation" value="1 site, 1 O-linked glycan (1 site)"/>
</dbReference>
<dbReference type="iPTMnet" id="Q68A21"/>
<dbReference type="PhosphoSitePlus" id="Q68A21"/>
<dbReference type="jPOST" id="Q68A21"/>
<dbReference type="PaxDb" id="10116-ENSRNOP00000009214"/>
<dbReference type="PeptideAtlas" id="Q68A21"/>
<dbReference type="GeneID" id="498407"/>
<dbReference type="KEGG" id="rno:498407"/>
<dbReference type="UCSC" id="RGD:1559465">
    <property type="organism name" value="rat"/>
</dbReference>
<dbReference type="AGR" id="RGD:1559465"/>
<dbReference type="CTD" id="5814"/>
<dbReference type="RGD" id="1559465">
    <property type="gene designation" value="Purb"/>
</dbReference>
<dbReference type="eggNOG" id="KOG3074">
    <property type="taxonomic scope" value="Eukaryota"/>
</dbReference>
<dbReference type="InParanoid" id="Q68A21"/>
<dbReference type="PhylomeDB" id="Q68A21"/>
<dbReference type="PRO" id="PR:Q68A21"/>
<dbReference type="Proteomes" id="UP000002494">
    <property type="component" value="Unplaced"/>
</dbReference>
<dbReference type="GO" id="GO:0005634">
    <property type="term" value="C:nucleus"/>
    <property type="evidence" value="ECO:0000314"/>
    <property type="project" value="HGNC-UCL"/>
</dbReference>
<dbReference type="GO" id="GO:0003700">
    <property type="term" value="F:DNA-binding transcription factor activity"/>
    <property type="evidence" value="ECO:0000266"/>
    <property type="project" value="RGD"/>
</dbReference>
<dbReference type="GO" id="GO:0000981">
    <property type="term" value="F:DNA-binding transcription factor activity, RNA polymerase II-specific"/>
    <property type="evidence" value="ECO:0000318"/>
    <property type="project" value="GO_Central"/>
</dbReference>
<dbReference type="GO" id="GO:0140297">
    <property type="term" value="F:DNA-binding transcription factor binding"/>
    <property type="evidence" value="ECO:0000250"/>
    <property type="project" value="UniProtKB"/>
</dbReference>
<dbReference type="GO" id="GO:0001227">
    <property type="term" value="F:DNA-binding transcription repressor activity, RNA polymerase II-specific"/>
    <property type="evidence" value="ECO:0000314"/>
    <property type="project" value="HGNC-UCL"/>
</dbReference>
<dbReference type="GO" id="GO:0003690">
    <property type="term" value="F:double-stranded DNA binding"/>
    <property type="evidence" value="ECO:0000266"/>
    <property type="project" value="RGD"/>
</dbReference>
<dbReference type="GO" id="GO:0003729">
    <property type="term" value="F:mRNA binding"/>
    <property type="evidence" value="ECO:0000250"/>
    <property type="project" value="UniProtKB"/>
</dbReference>
<dbReference type="GO" id="GO:0000900">
    <property type="term" value="F:mRNA regulatory element binding translation repressor activity"/>
    <property type="evidence" value="ECO:0000314"/>
    <property type="project" value="HGNC-UCL"/>
</dbReference>
<dbReference type="GO" id="GO:0032422">
    <property type="term" value="F:purine-rich negative regulatory element binding"/>
    <property type="evidence" value="ECO:0000314"/>
    <property type="project" value="HGNC-UCL"/>
</dbReference>
<dbReference type="GO" id="GO:0003723">
    <property type="term" value="F:RNA binding"/>
    <property type="evidence" value="ECO:0000266"/>
    <property type="project" value="RGD"/>
</dbReference>
<dbReference type="GO" id="GO:0000977">
    <property type="term" value="F:RNA polymerase II transcription regulatory region sequence-specific DNA binding"/>
    <property type="evidence" value="ECO:0000266"/>
    <property type="project" value="RGD"/>
</dbReference>
<dbReference type="GO" id="GO:0003697">
    <property type="term" value="F:single-stranded DNA binding"/>
    <property type="evidence" value="ECO:0000250"/>
    <property type="project" value="UniProtKB"/>
</dbReference>
<dbReference type="GO" id="GO:0046332">
    <property type="term" value="F:SMAD binding"/>
    <property type="evidence" value="ECO:0000266"/>
    <property type="project" value="RGD"/>
</dbReference>
<dbReference type="GO" id="GO:0045892">
    <property type="term" value="P:negative regulation of DNA-templated transcription"/>
    <property type="evidence" value="ECO:0000266"/>
    <property type="project" value="RGD"/>
</dbReference>
<dbReference type="GO" id="GO:0000122">
    <property type="term" value="P:negative regulation of transcription by RNA polymerase II"/>
    <property type="evidence" value="ECO:0000314"/>
    <property type="project" value="HGNC-UCL"/>
</dbReference>
<dbReference type="GO" id="GO:0045944">
    <property type="term" value="P:positive regulation of transcription by RNA polymerase II"/>
    <property type="evidence" value="ECO:0000250"/>
    <property type="project" value="UniProtKB"/>
</dbReference>
<dbReference type="GO" id="GO:0006357">
    <property type="term" value="P:regulation of transcription by RNA polymerase II"/>
    <property type="evidence" value="ECO:0000318"/>
    <property type="project" value="GO_Central"/>
</dbReference>
<dbReference type="FunFam" id="3.10.450.700:FF:000001">
    <property type="entry name" value="Purine-rich element binding protein A"/>
    <property type="match status" value="1"/>
</dbReference>
<dbReference type="FunFam" id="3.30.2450.30:FF:000001">
    <property type="entry name" value="Purine-rich element binding protein A"/>
    <property type="match status" value="1"/>
</dbReference>
<dbReference type="Gene3D" id="3.10.450.700">
    <property type="match status" value="1"/>
</dbReference>
<dbReference type="Gene3D" id="3.30.2450.30">
    <property type="match status" value="1"/>
</dbReference>
<dbReference type="InterPro" id="IPR006628">
    <property type="entry name" value="PUR-bd_fam"/>
</dbReference>
<dbReference type="PANTHER" id="PTHR12611">
    <property type="entry name" value="PUR-TRANSCRIPTIONAL ACTIVATOR"/>
    <property type="match status" value="1"/>
</dbReference>
<dbReference type="PANTHER" id="PTHR12611:SF4">
    <property type="entry name" value="TRANSCRIPTIONAL ACTIVATOR PROTEIN PUR-BETA"/>
    <property type="match status" value="1"/>
</dbReference>
<dbReference type="Pfam" id="PF04845">
    <property type="entry name" value="PurA"/>
    <property type="match status" value="1"/>
</dbReference>
<dbReference type="SMART" id="SM00712">
    <property type="entry name" value="PUR"/>
    <property type="match status" value="3"/>
</dbReference>
<sequence length="315" mass="33418">MADGDSGSERGGGGPGSFQPAPRGGGGPGGEQETQELASKRLDIQNKRFYLDVKQNAKGRFLKIAEVGAGGSKSRLTLSMAVAAEFRDSLGDFIEHYAQLGPSSPEQLAAGAEEGGGPRRALKSEFLVRENRKYYLDLKENQRGRFLRIRQTVNRGGGGFGGGPGPGGLQSGQTIALPAQGLIEFRDALAKLIDDYGGEDDELAGGPGGGAGGPGGGLYGELPEGTSITVDSKRFFFDVGCNKYGVFLRVSEVKPSYRNAITVPFKAWGKFGGAFCRYADEMKEIQERQRDKLYERRGGGSGGGDESEGEEVDED</sequence>
<feature type="initiator methionine" description="Removed" evidence="2">
    <location>
        <position position="1"/>
    </location>
</feature>
<feature type="chain" id="PRO_0000225617" description="Transcriptional regulator protein Pur-beta">
    <location>
        <begin position="2"/>
        <end position="315"/>
    </location>
</feature>
<feature type="region of interest" description="Disordered" evidence="3">
    <location>
        <begin position="1"/>
        <end position="39"/>
    </location>
</feature>
<feature type="region of interest" description="DNA-binding" evidence="1">
    <location>
        <begin position="28"/>
        <end position="254"/>
    </location>
</feature>
<feature type="region of interest" description="Disordered" evidence="3">
    <location>
        <begin position="200"/>
        <end position="220"/>
    </location>
</feature>
<feature type="region of interest" description="Disordered" evidence="3">
    <location>
        <begin position="288"/>
        <end position="315"/>
    </location>
</feature>
<feature type="compositionally biased region" description="Gly residues" evidence="3">
    <location>
        <begin position="205"/>
        <end position="219"/>
    </location>
</feature>
<feature type="compositionally biased region" description="Basic and acidic residues" evidence="3">
    <location>
        <begin position="288"/>
        <end position="298"/>
    </location>
</feature>
<feature type="compositionally biased region" description="Acidic residues" evidence="3">
    <location>
        <begin position="305"/>
        <end position="315"/>
    </location>
</feature>
<feature type="modified residue" description="N-acetylalanine" evidence="2">
    <location>
        <position position="2"/>
    </location>
</feature>
<feature type="modified residue" description="Phosphoserine" evidence="2">
    <location>
        <position position="6"/>
    </location>
</feature>
<feature type="modified residue" description="Phosphoserine" evidence="2">
    <location>
        <position position="8"/>
    </location>
</feature>
<feature type="modified residue" description="Omega-N-methylarginine" evidence="1">
    <location>
        <position position="23"/>
    </location>
</feature>
<feature type="modified residue" description="Phosphothreonine" evidence="1">
    <location>
        <position position="34"/>
    </location>
</feature>
<feature type="modified residue" description="Phosphoserine" evidence="8">
    <location>
        <position position="104"/>
    </location>
</feature>
<feature type="modified residue" description="Omega-N-methylarginine" evidence="1">
    <location>
        <position position="155"/>
    </location>
</feature>
<feature type="modified residue" description="N6-acetyllysine" evidence="1">
    <location>
        <position position="270"/>
    </location>
</feature>
<feature type="modified residue" description="Omega-N-methylarginine" evidence="1">
    <location>
        <position position="297"/>
    </location>
</feature>
<feature type="modified residue" description="Phosphoserine" evidence="8">
    <location>
        <position position="301"/>
    </location>
</feature>
<feature type="modified residue" description="Phosphoserine" evidence="8">
    <location>
        <position position="307"/>
    </location>
</feature>
<proteinExistence type="evidence at protein level"/>
<evidence type="ECO:0000250" key="1">
    <source>
        <dbReference type="UniProtKB" id="O35295"/>
    </source>
</evidence>
<evidence type="ECO:0000250" key="2">
    <source>
        <dbReference type="UniProtKB" id="Q96QR8"/>
    </source>
</evidence>
<evidence type="ECO:0000256" key="3">
    <source>
        <dbReference type="SAM" id="MobiDB-lite"/>
    </source>
</evidence>
<evidence type="ECO:0000269" key="4">
    <source>
    </source>
</evidence>
<evidence type="ECO:0000269" key="5">
    <source>
    </source>
</evidence>
<evidence type="ECO:0000269" key="6">
    <source>
    </source>
</evidence>
<evidence type="ECO:0000305" key="7"/>
<evidence type="ECO:0007744" key="8">
    <source>
    </source>
</evidence>
<gene>
    <name type="primary">Purb</name>
</gene>
<organism>
    <name type="scientific">Rattus norvegicus</name>
    <name type="common">Rat</name>
    <dbReference type="NCBI Taxonomy" id="10116"/>
    <lineage>
        <taxon>Eukaryota</taxon>
        <taxon>Metazoa</taxon>
        <taxon>Chordata</taxon>
        <taxon>Craniata</taxon>
        <taxon>Vertebrata</taxon>
        <taxon>Euteleostomi</taxon>
        <taxon>Mammalia</taxon>
        <taxon>Eutheria</taxon>
        <taxon>Euarchontoglires</taxon>
        <taxon>Glires</taxon>
        <taxon>Rodentia</taxon>
        <taxon>Myomorpha</taxon>
        <taxon>Muroidea</taxon>
        <taxon>Muridae</taxon>
        <taxon>Murinae</taxon>
        <taxon>Rattus</taxon>
    </lineage>
</organism>
<reference key="1">
    <citation type="journal article" date="2006" name="Gene">
        <title>The galectin-3 gene promoter binding proteins in the liver of rats 48-h post-treatment with CCl(4).</title>
        <authorList>
            <person name="Li F."/>
            <person name="Kato I."/>
            <person name="Kawaguchi H."/>
            <person name="Takasawa K."/>
            <person name="Hibino Y."/>
            <person name="Hiraga K."/>
        </authorList>
    </citation>
    <scope>NUCLEOTIDE SEQUENCE [MRNA]</scope>
    <scope>FUNCTION</scope>
    <scope>INDUCTION</scope>
    <scope>TISSUE SPECIFICITY</scope>
</reference>
<reference key="2">
    <citation type="submission" date="2007-04" db="UniProtKB">
        <authorList>
            <person name="Lubec G."/>
            <person name="Diao W."/>
            <person name="Chen W.-Q."/>
        </authorList>
    </citation>
    <scope>PROTEIN SEQUENCE OF 49-54; 76-87; 124-129; 235-249; 259-266 AND 271-288</scope>
    <scope>IDENTIFICATION BY MASS SPECTROMETRY</scope>
    <source>
        <strain>Sprague-Dawley</strain>
        <tissue>Hippocampus</tissue>
    </source>
</reference>
<reference key="3">
    <citation type="journal article" date="2000" name="J. Neurochem.">
        <title>The single-stranded DNA- and RNA-binding proteins pur alpha and pur beta link BC1 RNA to microtubules through binding to the dendrite-targeting RNA motifs.</title>
        <authorList>
            <person name="Ohashi S."/>
            <person name="Kobayashi S."/>
            <person name="Omori A."/>
            <person name="Ohara S."/>
            <person name="Omae A."/>
            <person name="Muramatsu T."/>
            <person name="Li Y."/>
            <person name="Anzai K."/>
        </authorList>
    </citation>
    <scope>FUNCTION</scope>
</reference>
<reference key="4">
    <citation type="journal article" date="2003" name="J. Biol. Chem.">
        <title>Single-stranded DNA-binding proteins PURalpha and PURbeta bind to a purine-rich negative regulatory element of the alpha-myosin heavy chain gene and control transcriptional and translational regulation of the gene expression. Implications in the repression of alpha-myosin heavy chain during heart failure.</title>
        <authorList>
            <person name="Gupta M."/>
            <person name="Sueblinvong V."/>
            <person name="Raman J."/>
            <person name="Jeevanandam V."/>
            <person name="Gupta M.P."/>
        </authorList>
    </citation>
    <scope>FUNCTION</scope>
    <scope>TISSUE SPECIFICITY</scope>
</reference>
<reference key="5">
    <citation type="journal article" date="2012" name="Nat. Commun.">
        <title>Quantitative maps of protein phosphorylation sites across 14 different rat organs and tissues.</title>
        <authorList>
            <person name="Lundby A."/>
            <person name="Secher A."/>
            <person name="Lage K."/>
            <person name="Nordsborg N.B."/>
            <person name="Dmytriyev A."/>
            <person name="Lundby C."/>
            <person name="Olsen J.V."/>
        </authorList>
    </citation>
    <scope>PHOSPHORYLATION [LARGE SCALE ANALYSIS] AT SER-104; SER-301 AND SER-307</scope>
    <scope>IDENTIFICATION BY MASS SPECTROMETRY [LARGE SCALE ANALYSIS]</scope>
</reference>
<name>PURB_RAT</name>
<protein>
    <recommendedName>
        <fullName>Transcriptional regulator protein Pur-beta</fullName>
    </recommendedName>
    <alternativeName>
        <fullName>Purine-rich element-binding protein B</fullName>
    </alternativeName>
</protein>
<comment type="function">
    <text evidence="1 2 4 5 6">Transcriptional regulator which can act as an activator or a repressor. Represses the transcription of ACTA2 in fibroblasts and smooth muscle cells via its ability to interact with the purine-rich strand of a MCAT- containing element in the 5' flanking region of the gene. Represses the transcription of MYOCD, capable of repressing all isoforms of MYOCD but the magnitude of the repressive effects is most notable for the SMC- specific isoforms. Promotes hepatic glucose production by activating the transcription of ADCY6, leading to cAMP accumulation, increased PKA activity, CREB activation, and increased transcription of PCK1 and G6PC genes. Has capacity to bind repeated elements in single-stranded DNA such as the purine-rich single strand of the PUR element located upstream of the MYC gene (By similarity). Participates in transcriptional and translational regulation of alpha-MHC expression in cardiac myocytes by binding to the purine-rich negative regulatory (PNR) element (PubMed:12933792). Modulates constitutive liver galectin-3 gene transcription by binding to its promoter (PubMed:16309856). May play a role in the dendritic transport of a subset of mRNAs (PubMed:11032866).</text>
</comment>
<comment type="subunit">
    <text evidence="1">Homodimer, heterodimer with PURA and heterotrimer with PURA and YBX1/Y-box protein 1. Interacts with MYOCD and SRF.</text>
</comment>
<comment type="subcellular location">
    <subcellularLocation>
        <location evidence="1">Nucleus</location>
    </subcellularLocation>
</comment>
<comment type="tissue specificity">
    <text evidence="5 6">Expressed in muscle cells and in the liver.</text>
</comment>
<comment type="induction">
    <text evidence="6">Induced in the liver 48 hours after tetrachloromethane (CCL4) administration.</text>
</comment>
<comment type="similarity">
    <text evidence="7">Belongs to the PUR DNA-binding protein family.</text>
</comment>
<keyword id="KW-0007">Acetylation</keyword>
<keyword id="KW-0010">Activator</keyword>
<keyword id="KW-0903">Direct protein sequencing</keyword>
<keyword id="KW-0238">DNA-binding</keyword>
<keyword id="KW-0488">Methylation</keyword>
<keyword id="KW-0539">Nucleus</keyword>
<keyword id="KW-0597">Phosphoprotein</keyword>
<keyword id="KW-1185">Reference proteome</keyword>
<keyword id="KW-0678">Repressor</keyword>
<keyword id="KW-0804">Transcription</keyword>
<keyword id="KW-0805">Transcription regulation</keyword>